<evidence type="ECO:0000255" key="1">
    <source>
        <dbReference type="HAMAP-Rule" id="MF_00166"/>
    </source>
</evidence>
<keyword id="KW-0010">Activator</keyword>
<keyword id="KW-0238">DNA-binding</keyword>
<keyword id="KW-0804">Transcription</keyword>
<keyword id="KW-0805">Transcription regulation</keyword>
<name>FIS_SHESA</name>
<sequence>MFDQTTNTEVHQLTVGKIETANGTIKPQLLRDAVKRAVTNFFAQLDGQEAQEVYEMVLSEVEAPLLDIIMQHTRGNQTRAANMLGINRGTLRKKLKKYGMN</sequence>
<organism>
    <name type="scientific">Shewanella sp. (strain ANA-3)</name>
    <dbReference type="NCBI Taxonomy" id="94122"/>
    <lineage>
        <taxon>Bacteria</taxon>
        <taxon>Pseudomonadati</taxon>
        <taxon>Pseudomonadota</taxon>
        <taxon>Gammaproteobacteria</taxon>
        <taxon>Alteromonadales</taxon>
        <taxon>Shewanellaceae</taxon>
        <taxon>Shewanella</taxon>
    </lineage>
</organism>
<accession>A0KS72</accession>
<comment type="function">
    <text evidence="1">Activates ribosomal RNA transcription. Plays a direct role in upstream activation of rRNA promoters.</text>
</comment>
<comment type="subunit">
    <text evidence="1">Homodimer.</text>
</comment>
<comment type="similarity">
    <text evidence="1">Belongs to the transcriptional regulatory Fis family.</text>
</comment>
<reference key="1">
    <citation type="submission" date="2006-09" db="EMBL/GenBank/DDBJ databases">
        <title>Complete sequence of chromosome 1 of Shewanella sp. ANA-3.</title>
        <authorList>
            <person name="Copeland A."/>
            <person name="Lucas S."/>
            <person name="Lapidus A."/>
            <person name="Barry K."/>
            <person name="Detter J.C."/>
            <person name="Glavina del Rio T."/>
            <person name="Hammon N."/>
            <person name="Israni S."/>
            <person name="Dalin E."/>
            <person name="Tice H."/>
            <person name="Pitluck S."/>
            <person name="Chertkov O."/>
            <person name="Brettin T."/>
            <person name="Bruce D."/>
            <person name="Han C."/>
            <person name="Tapia R."/>
            <person name="Gilna P."/>
            <person name="Schmutz J."/>
            <person name="Larimer F."/>
            <person name="Land M."/>
            <person name="Hauser L."/>
            <person name="Kyrpides N."/>
            <person name="Kim E."/>
            <person name="Newman D."/>
            <person name="Salticov C."/>
            <person name="Konstantinidis K."/>
            <person name="Klappenback J."/>
            <person name="Tiedje J."/>
            <person name="Richardson P."/>
        </authorList>
    </citation>
    <scope>NUCLEOTIDE SEQUENCE [LARGE SCALE GENOMIC DNA]</scope>
    <source>
        <strain>ANA-3</strain>
    </source>
</reference>
<proteinExistence type="inferred from homology"/>
<gene>
    <name evidence="1" type="primary">fis</name>
    <name type="ordered locus">Shewana3_0398</name>
</gene>
<feature type="chain" id="PRO_1000023341" description="DNA-binding protein Fis">
    <location>
        <begin position="1"/>
        <end position="101"/>
    </location>
</feature>
<feature type="DNA-binding region" description="H-T-H motif" evidence="1">
    <location>
        <begin position="77"/>
        <end position="96"/>
    </location>
</feature>
<protein>
    <recommendedName>
        <fullName evidence="1">DNA-binding protein Fis</fullName>
    </recommendedName>
</protein>
<dbReference type="EMBL" id="CP000469">
    <property type="protein sequence ID" value="ABK46641.1"/>
    <property type="molecule type" value="Genomic_DNA"/>
</dbReference>
<dbReference type="RefSeq" id="WP_006083371.1">
    <property type="nucleotide sequence ID" value="NC_008577.1"/>
</dbReference>
<dbReference type="SMR" id="A0KS72"/>
<dbReference type="STRING" id="94122.Shewana3_0398"/>
<dbReference type="GeneID" id="94726394"/>
<dbReference type="KEGG" id="shn:Shewana3_0398"/>
<dbReference type="eggNOG" id="COG2901">
    <property type="taxonomic scope" value="Bacteria"/>
</dbReference>
<dbReference type="HOGENOM" id="CLU_158040_3_3_6"/>
<dbReference type="OrthoDB" id="9802388at2"/>
<dbReference type="Proteomes" id="UP000002589">
    <property type="component" value="Chromosome"/>
</dbReference>
<dbReference type="GO" id="GO:0003700">
    <property type="term" value="F:DNA-binding transcription factor activity"/>
    <property type="evidence" value="ECO:0007669"/>
    <property type="project" value="UniProtKB-UniRule"/>
</dbReference>
<dbReference type="GO" id="GO:0043565">
    <property type="term" value="F:sequence-specific DNA binding"/>
    <property type="evidence" value="ECO:0007669"/>
    <property type="project" value="InterPro"/>
</dbReference>
<dbReference type="FunFam" id="1.10.10.60:FF:000006">
    <property type="entry name" value="DNA-binding protein Fis"/>
    <property type="match status" value="1"/>
</dbReference>
<dbReference type="Gene3D" id="1.10.10.60">
    <property type="entry name" value="Homeodomain-like"/>
    <property type="match status" value="1"/>
</dbReference>
<dbReference type="HAMAP" id="MF_00166">
    <property type="entry name" value="DNA_binding_Fis"/>
    <property type="match status" value="1"/>
</dbReference>
<dbReference type="InterPro" id="IPR005412">
    <property type="entry name" value="Fis_DNA-bd"/>
</dbReference>
<dbReference type="InterPro" id="IPR009057">
    <property type="entry name" value="Homeodomain-like_sf"/>
</dbReference>
<dbReference type="InterPro" id="IPR002197">
    <property type="entry name" value="HTH_Fis"/>
</dbReference>
<dbReference type="InterPro" id="IPR050207">
    <property type="entry name" value="Trans_regulatory_Fis"/>
</dbReference>
<dbReference type="NCBIfam" id="NF001659">
    <property type="entry name" value="PRK00430.1"/>
    <property type="match status" value="1"/>
</dbReference>
<dbReference type="PANTHER" id="PTHR47918">
    <property type="entry name" value="DNA-BINDING PROTEIN FIS"/>
    <property type="match status" value="1"/>
</dbReference>
<dbReference type="PANTHER" id="PTHR47918:SF1">
    <property type="entry name" value="DNA-BINDING PROTEIN FIS"/>
    <property type="match status" value="1"/>
</dbReference>
<dbReference type="Pfam" id="PF02954">
    <property type="entry name" value="HTH_8"/>
    <property type="match status" value="1"/>
</dbReference>
<dbReference type="PIRSF" id="PIRSF002097">
    <property type="entry name" value="DNA-binding_Fis"/>
    <property type="match status" value="1"/>
</dbReference>
<dbReference type="PRINTS" id="PR01591">
    <property type="entry name" value="DNABINDNGFIS"/>
</dbReference>
<dbReference type="PRINTS" id="PR01590">
    <property type="entry name" value="HTHFIS"/>
</dbReference>
<dbReference type="SUPFAM" id="SSF46689">
    <property type="entry name" value="Homeodomain-like"/>
    <property type="match status" value="1"/>
</dbReference>